<proteinExistence type="evidence at protein level"/>
<accession>P25274</accession>
<gene>
    <name type="primary">MBP</name>
</gene>
<sequence length="168" mass="18217">ASQKRPSQRHGSKYLATASTMDHARHGFLPRHRDTGILDSIGRFFSSDRGAPKRGSGKDHAARTTHYGSLPQKSGHRPQDENPVVHFFKNIVTPRTPPPSQGKGRGTVLSRFSWGAEGQKPGFGYGGRAADYKSAHKGLKGADAQGTLSRLFKLGGRDSRSGSPMARR</sequence>
<comment type="function">
    <text evidence="1">Is, with PLP, the most abundant protein component of the myelin membrane in the CNS. Has a role in both the formation and stabilization of this compact multilayer arrangement of bilayers. Each splice variant and charge isomer may have a specialized function in the assembly of an optimized, biochemically functional myelin membrane (By similarity).</text>
</comment>
<comment type="subunit">
    <text evidence="1">Homodimer.</text>
</comment>
<comment type="subcellular location">
    <subcellularLocation>
        <location>Myelin membrane</location>
        <topology>Peripheral membrane protein</topology>
        <orientation>Cytoplasmic side</orientation>
    </subcellularLocation>
    <text>Cytoplasmic side of myelin.</text>
</comment>
<comment type="tissue specificity">
    <text>Found in both the central and the peripheral nervous system.</text>
</comment>
<comment type="PTM">
    <text evidence="7">As in other animals, several charge isomers may be produced as a result of optional post-translational modifications, such as phosphorylation of serine or threonine residues, deamidation of glutamine or asparagine residues, citrullination and methylation of arginine residues.</text>
</comment>
<comment type="PTM">
    <text evidence="1">Phosphorylated by TAOK2, VRK2, MAPK11, MAPK12, MAPK14 and MINK1.</text>
</comment>
<comment type="PTM">
    <text evidence="2">Proteolytically cleaved in B cell lysosomes by cathepsin CTSG which degrades the major immunogenic MBP epitope and prevents the activation of MBP-specific autoreactive T cells.</text>
</comment>
<comment type="similarity">
    <text evidence="8">Belongs to the myelin basic protein family.</text>
</comment>
<protein>
    <recommendedName>
        <fullName>Myelin basic protein</fullName>
        <shortName>MBP</shortName>
    </recommendedName>
    <alternativeName>
        <fullName>Myelin A1 protein</fullName>
    </alternativeName>
    <alternativeName>
        <fullName>Myelin P1 protein</fullName>
    </alternativeName>
</protein>
<evidence type="ECO:0000250" key="1"/>
<evidence type="ECO:0000250" key="2">
    <source>
        <dbReference type="UniProtKB" id="P02686"/>
    </source>
</evidence>
<evidence type="ECO:0000250" key="3">
    <source>
        <dbReference type="UniProtKB" id="P02687"/>
    </source>
</evidence>
<evidence type="ECO:0000250" key="4">
    <source>
        <dbReference type="UniProtKB" id="P02688"/>
    </source>
</evidence>
<evidence type="ECO:0000250" key="5">
    <source>
        <dbReference type="UniProtKB" id="P04370"/>
    </source>
</evidence>
<evidence type="ECO:0000256" key="6">
    <source>
        <dbReference type="SAM" id="MobiDB-lite"/>
    </source>
</evidence>
<evidence type="ECO:0000269" key="7">
    <source>
    </source>
</evidence>
<evidence type="ECO:0000305" key="8"/>
<keyword id="KW-0007">Acetylation</keyword>
<keyword id="KW-0069">Autoimmune encephalomyelitis</keyword>
<keyword id="KW-1003">Cell membrane</keyword>
<keyword id="KW-0164">Citrullination</keyword>
<keyword id="KW-0903">Direct protein sequencing</keyword>
<keyword id="KW-0472">Membrane</keyword>
<keyword id="KW-0488">Methylation</keyword>
<keyword id="KW-0597">Phosphoprotein</keyword>
<keyword id="KW-1185">Reference proteome</keyword>
<dbReference type="STRING" id="9986.ENSOCUP00000046111"/>
<dbReference type="iPTMnet" id="P25274"/>
<dbReference type="PaxDb" id="9986-ENSOCUP00000016532"/>
<dbReference type="eggNOG" id="ENOG502S4SJ">
    <property type="taxonomic scope" value="Eukaryota"/>
</dbReference>
<dbReference type="InParanoid" id="P25274"/>
<dbReference type="Proteomes" id="UP000001811">
    <property type="component" value="Unplaced"/>
</dbReference>
<dbReference type="GO" id="GO:0043218">
    <property type="term" value="C:compact myelin"/>
    <property type="evidence" value="ECO:0007669"/>
    <property type="project" value="TreeGrafter"/>
</dbReference>
<dbReference type="GO" id="GO:0033269">
    <property type="term" value="C:internode region of axon"/>
    <property type="evidence" value="ECO:0007669"/>
    <property type="project" value="TreeGrafter"/>
</dbReference>
<dbReference type="GO" id="GO:0043025">
    <property type="term" value="C:neuronal cell body"/>
    <property type="evidence" value="ECO:0007669"/>
    <property type="project" value="TreeGrafter"/>
</dbReference>
<dbReference type="GO" id="GO:0005886">
    <property type="term" value="C:plasma membrane"/>
    <property type="evidence" value="ECO:0007669"/>
    <property type="project" value="UniProtKB-KW"/>
</dbReference>
<dbReference type="GO" id="GO:0019911">
    <property type="term" value="F:structural constituent of myelin sheath"/>
    <property type="evidence" value="ECO:0007669"/>
    <property type="project" value="InterPro"/>
</dbReference>
<dbReference type="GO" id="GO:0042552">
    <property type="term" value="P:myelination"/>
    <property type="evidence" value="ECO:0007669"/>
    <property type="project" value="TreeGrafter"/>
</dbReference>
<dbReference type="InterPro" id="IPR000548">
    <property type="entry name" value="Myelin_BP"/>
</dbReference>
<dbReference type="PANTHER" id="PTHR11429">
    <property type="entry name" value="MYELIN BASIC PROTEIN"/>
    <property type="match status" value="1"/>
</dbReference>
<dbReference type="PANTHER" id="PTHR11429:SF0">
    <property type="entry name" value="MYELIN BASIC PROTEIN"/>
    <property type="match status" value="1"/>
</dbReference>
<dbReference type="Pfam" id="PF01669">
    <property type="entry name" value="Myelin_MBP"/>
    <property type="match status" value="1"/>
</dbReference>
<dbReference type="PRINTS" id="PR00212">
    <property type="entry name" value="MYELINMBP"/>
</dbReference>
<dbReference type="PROSITE" id="PS00569">
    <property type="entry name" value="MYELIN_MBP"/>
    <property type="match status" value="1"/>
</dbReference>
<organism>
    <name type="scientific">Oryctolagus cuniculus</name>
    <name type="common">Rabbit</name>
    <dbReference type="NCBI Taxonomy" id="9986"/>
    <lineage>
        <taxon>Eukaryota</taxon>
        <taxon>Metazoa</taxon>
        <taxon>Chordata</taxon>
        <taxon>Craniata</taxon>
        <taxon>Vertebrata</taxon>
        <taxon>Euteleostomi</taxon>
        <taxon>Mammalia</taxon>
        <taxon>Eutheria</taxon>
        <taxon>Euarchontoglires</taxon>
        <taxon>Glires</taxon>
        <taxon>Lagomorpha</taxon>
        <taxon>Leporidae</taxon>
        <taxon>Oryctolagus</taxon>
    </lineage>
</organism>
<reference key="1">
    <citation type="journal article" date="1972" name="Arch. Biochem. Biophys.">
        <title>The proposed amino acid sequence of the P1 protein of rabbit sciatic nerve myelin.</title>
        <authorList>
            <person name="Brostoff S.W."/>
            <person name="Eylar E.H."/>
        </authorList>
    </citation>
    <scope>PRELIMINARY PROTEIN SEQUENCE</scope>
    <source>
        <tissue>Sciatic nerve</tissue>
    </source>
</reference>
<reference key="2">
    <citation type="journal article" date="1971" name="J. Biol. Chem.">
        <title>Encephalitogenic fragment of myelin basic protein. Amino acid sequence of bovine, rabbit, guinea pig, monkey, and human fragments.</title>
        <authorList>
            <person name="Shapira R."/>
            <person name="McKneally S.S."/>
            <person name="Chou F."/>
            <person name="Kibler R.F."/>
        </authorList>
    </citation>
    <scope>PROTEIN SEQUENCE OF 45-86</scope>
</reference>
<reference key="3">
    <citation type="journal article" date="1983" name="J. Biol. Chem.">
        <title>Identification of multiple in vivo phosphorylation sites in rabbit myelin basic protein.</title>
        <authorList>
            <person name="Martenson R.E."/>
            <person name="Law M.J."/>
            <person name="Deibler G.E."/>
        </authorList>
    </citation>
    <scope>PHOSPHORYLATION AT SER-7; SER-56; THR-96; SER-113 AND SER-163</scope>
    <scope>METHYLATION AT ARG-105</scope>
</reference>
<feature type="chain" id="PRO_0000158994" description="Myelin basic protein">
    <location>
        <begin position="1"/>
        <end position="168"/>
    </location>
</feature>
<feature type="region of interest" description="Disordered" evidence="6">
    <location>
        <begin position="42"/>
        <end position="84"/>
    </location>
</feature>
<feature type="region of interest" description="Induces experimental autoimmune encephalomyelitis (EAE)">
    <location>
        <begin position="45"/>
        <end position="86"/>
    </location>
</feature>
<feature type="site" description="Cleavage; by CTSG" evidence="2">
    <location>
        <begin position="88"/>
        <end position="89"/>
    </location>
</feature>
<feature type="site" description="Cleavage; by CTSG" evidence="2">
    <location>
        <begin position="112"/>
        <end position="113"/>
    </location>
</feature>
<feature type="modified residue" description="N-acetylalanine" evidence="3">
    <location>
        <position position="1"/>
    </location>
</feature>
<feature type="modified residue" description="Phosphoserine" evidence="7">
    <location>
        <position position="7"/>
    </location>
</feature>
<feature type="modified residue" description="Phosphoserine" evidence="5">
    <location>
        <position position="12"/>
    </location>
</feature>
<feature type="modified residue" description="Phosphotyrosine" evidence="4">
    <location>
        <position position="14"/>
    </location>
</feature>
<feature type="modified residue" description="Phosphothreonine" evidence="4">
    <location>
        <position position="17"/>
    </location>
</feature>
<feature type="modified residue" description="Phosphoserine" evidence="5">
    <location>
        <position position="19"/>
    </location>
</feature>
<feature type="modified residue" description="Phosphothreonine" evidence="4">
    <location>
        <position position="20"/>
    </location>
</feature>
<feature type="modified residue" description="Citrulline" evidence="1">
    <location>
        <position position="25"/>
    </location>
</feature>
<feature type="modified residue" description="Citrulline" evidence="1">
    <location>
        <position position="31"/>
    </location>
</feature>
<feature type="modified residue" description="Phosphothreonine" evidence="5">
    <location>
        <position position="35"/>
    </location>
</feature>
<feature type="modified residue" description="Phosphoserine" evidence="5">
    <location>
        <position position="40"/>
    </location>
</feature>
<feature type="modified residue" description="Omega-N-methylarginine" evidence="5">
    <location>
        <position position="43"/>
    </location>
</feature>
<feature type="modified residue" description="Omega-N-methylarginine" evidence="5">
    <location>
        <position position="49"/>
    </location>
</feature>
<feature type="modified residue" description="Phosphoserine" evidence="7">
    <location>
        <position position="56"/>
    </location>
</feature>
<feature type="modified residue" description="Phosphothreonine" evidence="5">
    <location>
        <position position="65"/>
    </location>
</feature>
<feature type="modified residue" description="Phosphotyrosine" evidence="5">
    <location>
        <position position="67"/>
    </location>
</feature>
<feature type="modified residue" description="Phosphoserine" evidence="5">
    <location>
        <position position="74"/>
    </location>
</feature>
<feature type="modified residue" description="Phosphothreonine" evidence="4">
    <location>
        <position position="93"/>
    </location>
</feature>
<feature type="modified residue" description="Phosphothreonine" evidence="7">
    <location>
        <position position="96"/>
    </location>
</feature>
<feature type="modified residue" description="Deamidated glutamine; partial" evidence="1">
    <location>
        <position position="101"/>
    </location>
</feature>
<feature type="modified residue" description="Omega-N-methylarginine; alternate" evidence="7">
    <location>
        <position position="105"/>
    </location>
</feature>
<feature type="modified residue" description="Symmetric dimethylarginine; alternate" evidence="7">
    <location>
        <position position="105"/>
    </location>
</feature>
<feature type="modified residue" description="Phosphoserine" evidence="7">
    <location>
        <position position="113"/>
    </location>
</feature>
<feature type="modified residue" description="N6-acetyllysine" evidence="3">
    <location>
        <position position="120"/>
    </location>
</feature>
<feature type="modified residue" description="Citrulline" evidence="1">
    <location>
        <position position="128"/>
    </location>
</feature>
<feature type="modified residue" description="Deamidated glutamine" evidence="1">
    <location>
        <position position="145"/>
    </location>
</feature>
<feature type="modified residue" description="Citrulline" evidence="1">
    <location>
        <position position="157"/>
    </location>
</feature>
<feature type="modified residue" description="Phosphoserine" evidence="3">
    <location>
        <position position="159"/>
    </location>
</feature>
<feature type="modified residue" description="Phosphoserine; by UHMK1" evidence="7">
    <location>
        <position position="163"/>
    </location>
</feature>
<feature type="modified residue" description="Citrulline" evidence="1">
    <location>
        <position position="168"/>
    </location>
</feature>
<feature type="sequence conflict" description="In Ref. 2; AA sequence." evidence="8" ref="2">
    <original>S</original>
    <variation>G</variation>
    <location>
        <position position="46"/>
    </location>
</feature>
<name>MBP_RABIT</name>